<proteinExistence type="inferred from homology"/>
<organismHost>
    <name type="scientific">Selenomonas ruminantium</name>
    <dbReference type="NCBI Taxonomy" id="971"/>
</organismHost>
<keyword id="KW-0945">Host-virus interaction</keyword>
<keyword id="KW-1161">Viral attachment to host cell</keyword>
<keyword id="KW-1230">Viral tail fiber protein</keyword>
<keyword id="KW-1227">Viral tail protein</keyword>
<keyword id="KW-0946">Virion</keyword>
<keyword id="KW-1160">Virus entry into host cell</keyword>
<gene>
    <name type="primary">37</name>
</gene>
<reference key="1">
    <citation type="journal article" date="1987" name="J. Mol. Biol.">
        <title>Receptor-recognizing proteins of T-even type bacteriophages. Constant and hypervariable regions and an unusual case of evolution.</title>
        <authorList>
            <person name="Montag D."/>
            <person name="Riede I."/>
            <person name="Eschbach M.-L."/>
            <person name="Degen M."/>
            <person name="Henning U."/>
        </authorList>
    </citation>
    <scope>NUCLEOTIDE SEQUENCE [GENOMIC DNA]</scope>
</reference>
<dbReference type="EMBL" id="X05676">
    <property type="protein sequence ID" value="CAA29160.1"/>
    <property type="molecule type" value="Genomic_DNA"/>
</dbReference>
<dbReference type="PIR" id="PS0064">
    <property type="entry name" value="TLBP1M"/>
</dbReference>
<dbReference type="SMR" id="P08231"/>
<dbReference type="GO" id="GO:0098024">
    <property type="term" value="C:virus tail, fiber"/>
    <property type="evidence" value="ECO:0007669"/>
    <property type="project" value="UniProtKB-KW"/>
</dbReference>
<dbReference type="GO" id="GO:0046718">
    <property type="term" value="P:symbiont entry into host cell"/>
    <property type="evidence" value="ECO:0007669"/>
    <property type="project" value="UniProtKB-KW"/>
</dbReference>
<dbReference type="GO" id="GO:0019062">
    <property type="term" value="P:virion attachment to host cell"/>
    <property type="evidence" value="ECO:0007669"/>
    <property type="project" value="UniProtKB-KW"/>
</dbReference>
<dbReference type="InterPro" id="IPR030392">
    <property type="entry name" value="S74_ICA"/>
</dbReference>
<dbReference type="Pfam" id="PF13884">
    <property type="entry name" value="Peptidase_S74"/>
    <property type="match status" value="1"/>
</dbReference>
<dbReference type="PROSITE" id="PS51688">
    <property type="entry name" value="ICA"/>
    <property type="match status" value="1"/>
</dbReference>
<comment type="function">
    <molecule>Mature tail fiber protein Gp37</molecule>
    <text evidence="1">Constitues the trimeric tip of the long tail fiber that mediates the attachment to the host receptor, together with the receptor-recognizing protein Gp38.</text>
</comment>
<comment type="function">
    <molecule>Intramolecular chaperone</molecule>
    <text evidence="3">The C-terminal chaperone protein mediates homotrimerization and proper folding of the catalytic trimer.</text>
</comment>
<comment type="subunit">
    <text evidence="1">Homotrimer. Interacts with the receptor-recognizing protein Gp38.</text>
</comment>
<comment type="subcellular location">
    <subcellularLocation>
        <location evidence="1">Virion</location>
    </subcellularLocation>
</comment>
<comment type="PTM">
    <text evidence="1">Proteolytic cleavage and release of the chaperone in the host cytosol stabilizes the folded protein.</text>
</comment>
<comment type="similarity">
    <text evidence="5">Belongs to the S16-like long tail fiber protein Gp37 family.</text>
</comment>
<accession>P08231</accession>
<sequence length="251" mass="28109">VYITNAGDITLSPKGVEMAHVNNVRLYVHGERWTASQPGDWGSQWQVEAPIFVDHGYVSQDCYYPIIKGRSVITNQGFVTAVDLGIRRVNNNWGQAIIRVGSAEACPAAGHPNAVFEFHYDGTFYSPGNGHFNDVYIRSDGRLKINKKELENGALEKVCRLKVYTYDKVKSIKDRSVIKREVGIIAQDLEKELPEAVSKVEVDGSDVLTISNSAVNALLIKAIQEMSEEIKELKTPLFTKIARKISKYFKF</sequence>
<feature type="chain" id="PRO_0000165029" description="Long tail fiber protein Gp37">
    <location>
        <begin position="1" status="less than"/>
        <end position="251"/>
    </location>
</feature>
<feature type="chain" id="PRO_0000458679" description="Mature tail fiber protein Gp37">
    <location>
        <begin position="1" status="less than"/>
        <end position="251"/>
    </location>
</feature>
<feature type="chain" id="PRO_0000458680" description="Intramolecular chaperone" evidence="3">
    <location>
        <begin position="140"/>
        <end position="251"/>
    </location>
</feature>
<feature type="domain" description="Peptidase S74" evidence="4">
    <location>
        <begin position="139"/>
        <end position="237"/>
    </location>
</feature>
<feature type="region of interest" description="Interaction with the receptor-recognizing protein gp38" evidence="1">
    <location>
        <begin position="134"/>
        <end position="137"/>
    </location>
</feature>
<feature type="site" description="Cleavage; by autolysis" evidence="2">
    <location>
        <begin position="139"/>
        <end position="140"/>
    </location>
</feature>
<feature type="non-terminal residue">
    <location>
        <position position="1"/>
    </location>
</feature>
<evidence type="ECO:0000250" key="1">
    <source>
        <dbReference type="UniProtKB" id="M1EAS5"/>
    </source>
</evidence>
<evidence type="ECO:0000250" key="2">
    <source>
        <dbReference type="UniProtKB" id="P49714"/>
    </source>
</evidence>
<evidence type="ECO:0000250" key="3">
    <source>
        <dbReference type="UniProtKB" id="Q04830"/>
    </source>
</evidence>
<evidence type="ECO:0000255" key="4">
    <source>
        <dbReference type="PROSITE-ProRule" id="PRU01025"/>
    </source>
</evidence>
<evidence type="ECO:0000305" key="5"/>
<name>FIB37_BPM1</name>
<organism>
    <name type="scientific">Enterobacteria phage M1</name>
    <name type="common">Bacteriophage M1</name>
    <dbReference type="NCBI Taxonomy" id="10676"/>
    <lineage>
        <taxon>Viruses</taxon>
        <taxon>Duplodnaviria</taxon>
        <taxon>Heunggongvirae</taxon>
        <taxon>Uroviricota</taxon>
        <taxon>Caudoviricetes</taxon>
        <taxon>Straboviridae</taxon>
        <taxon>Tevenvirinae</taxon>
        <taxon>Tequatrovirus</taxon>
    </lineage>
</organism>
<protein>
    <recommendedName>
        <fullName>Long tail fiber protein Gp37</fullName>
        <shortName>Protein Gp37</shortName>
    </recommendedName>
    <alternativeName>
        <fullName evidence="5">Receptor-recognizing protein</fullName>
    </alternativeName>
    <component>
        <recommendedName>
            <fullName evidence="2">Mature tail fiber protein Gp37</fullName>
        </recommendedName>
    </component>
    <component>
        <recommendedName>
            <fullName evidence="3">Intramolecular chaperone</fullName>
        </recommendedName>
    </component>
</protein>